<keyword id="KW-0997">Cell inner membrane</keyword>
<keyword id="KW-1003">Cell membrane</keyword>
<keyword id="KW-0285">Flavoprotein</keyword>
<keyword id="KW-0288">FMN</keyword>
<keyword id="KW-0472">Membrane</keyword>
<keyword id="KW-0560">Oxidoreductase</keyword>
<evidence type="ECO:0000255" key="1">
    <source>
        <dbReference type="HAMAP-Rule" id="MF_01559"/>
    </source>
</evidence>
<sequence>MIISASTDYRAAAQRKLPPFLFHYIDGGAYAEYTLRRNVEDLSAIALRQRVLKNMSELSLETRLFDETLAMPVALAPVGLTGMYARRGEVQAARAAAAKGVPFTLSTVSVCPIEEVAPAIDRPMWFQLYVLKDRGFMRNALERAKAAGVTTLVFTVDMPVPGARYRDAHSGMSGPYAAPRRILQAMTHPAWAWDVGLLGKPHDLGNISTYRGNPTGLEDYIGWLGANFDPSISWKDLEWIREFWNGPMVIKGILDPEDAKDAVKFGADGIVVSNHGGRQLDGVLSSARALPAIADAVKGELAILADSGIRTGLDVVRMIALGADSVLLGRAFVYALAAAGEAGVRNLLELIEKEMRVAMVLTGAKSIGEISADSLVRELGA</sequence>
<comment type="function">
    <text evidence="1">Catalyzes the conversion of L-lactate to pyruvate. Is coupled to the respiratory chain.</text>
</comment>
<comment type="catalytic activity">
    <reaction evidence="1">
        <text>(S)-lactate + A = pyruvate + AH2</text>
        <dbReference type="Rhea" id="RHEA:45816"/>
        <dbReference type="ChEBI" id="CHEBI:13193"/>
        <dbReference type="ChEBI" id="CHEBI:15361"/>
        <dbReference type="ChEBI" id="CHEBI:16651"/>
        <dbReference type="ChEBI" id="CHEBI:17499"/>
    </reaction>
</comment>
<comment type="cofactor">
    <cofactor evidence="1">
        <name>FMN</name>
        <dbReference type="ChEBI" id="CHEBI:58210"/>
    </cofactor>
</comment>
<comment type="subunit">
    <text evidence="1">Homotetramer.</text>
</comment>
<comment type="subcellular location">
    <subcellularLocation>
        <location evidence="1">Cell inner membrane</location>
        <topology evidence="1">Peripheral membrane protein</topology>
    </subcellularLocation>
</comment>
<comment type="similarity">
    <text evidence="1">Belongs to the FMN-dependent alpha-hydroxy acid dehydrogenase family.</text>
</comment>
<reference key="1">
    <citation type="submission" date="2007-06" db="EMBL/GenBank/DDBJ databases">
        <authorList>
            <person name="Dodson R.J."/>
            <person name="Harkins D."/>
            <person name="Paulsen I.T."/>
        </authorList>
    </citation>
    <scope>NUCLEOTIDE SEQUENCE [LARGE SCALE GENOMIC DNA]</scope>
    <source>
        <strain>DSM 24068 / PA7</strain>
    </source>
</reference>
<accession>A6VCM8</accession>
<proteinExistence type="inferred from homology"/>
<gene>
    <name evidence="1" type="primary">lldD</name>
    <name type="ordered locus">PSPA7_5491</name>
</gene>
<organism>
    <name type="scientific">Pseudomonas paraeruginosa (strain DSM 24068 / PA7)</name>
    <name type="common">Pseudomonas aeruginosa (strain PA7)</name>
    <dbReference type="NCBI Taxonomy" id="381754"/>
    <lineage>
        <taxon>Bacteria</taxon>
        <taxon>Pseudomonadati</taxon>
        <taxon>Pseudomonadota</taxon>
        <taxon>Gammaproteobacteria</taxon>
        <taxon>Pseudomonadales</taxon>
        <taxon>Pseudomonadaceae</taxon>
        <taxon>Pseudomonas</taxon>
        <taxon>Pseudomonas paraeruginosa</taxon>
    </lineage>
</organism>
<feature type="chain" id="PRO_1000068988" description="L-lactate dehydrogenase">
    <location>
        <begin position="1"/>
        <end position="381"/>
    </location>
</feature>
<feature type="domain" description="FMN hydroxy acid dehydrogenase" evidence="1">
    <location>
        <begin position="1"/>
        <end position="380"/>
    </location>
</feature>
<feature type="active site" description="Proton acceptor" evidence="1">
    <location>
        <position position="275"/>
    </location>
</feature>
<feature type="binding site" evidence="1">
    <location>
        <position position="24"/>
    </location>
    <ligand>
        <name>substrate</name>
    </ligand>
</feature>
<feature type="binding site" evidence="1">
    <location>
        <position position="106"/>
    </location>
    <ligand>
        <name>FMN</name>
        <dbReference type="ChEBI" id="CHEBI:58210"/>
    </ligand>
</feature>
<feature type="binding site" evidence="1">
    <location>
        <position position="127"/>
    </location>
    <ligand>
        <name>FMN</name>
        <dbReference type="ChEBI" id="CHEBI:58210"/>
    </ligand>
</feature>
<feature type="binding site" evidence="1">
    <location>
        <position position="129"/>
    </location>
    <ligand>
        <name>substrate</name>
    </ligand>
</feature>
<feature type="binding site" evidence="1">
    <location>
        <position position="155"/>
    </location>
    <ligand>
        <name>FMN</name>
        <dbReference type="ChEBI" id="CHEBI:58210"/>
    </ligand>
</feature>
<feature type="binding site" evidence="1">
    <location>
        <position position="164"/>
    </location>
    <ligand>
        <name>substrate</name>
    </ligand>
</feature>
<feature type="binding site" evidence="1">
    <location>
        <position position="251"/>
    </location>
    <ligand>
        <name>FMN</name>
        <dbReference type="ChEBI" id="CHEBI:58210"/>
    </ligand>
</feature>
<feature type="binding site" evidence="1">
    <location>
        <position position="278"/>
    </location>
    <ligand>
        <name>substrate</name>
    </ligand>
</feature>
<feature type="binding site" evidence="1">
    <location>
        <begin position="306"/>
        <end position="330"/>
    </location>
    <ligand>
        <name>FMN</name>
        <dbReference type="ChEBI" id="CHEBI:58210"/>
    </ligand>
</feature>
<dbReference type="EC" id="1.1.-.-" evidence="1"/>
<dbReference type="EMBL" id="CP000744">
    <property type="protein sequence ID" value="ABR83637.1"/>
    <property type="molecule type" value="Genomic_DNA"/>
</dbReference>
<dbReference type="RefSeq" id="WP_012077502.1">
    <property type="nucleotide sequence ID" value="NC_009656.1"/>
</dbReference>
<dbReference type="SMR" id="A6VCM8"/>
<dbReference type="KEGG" id="pap:PSPA7_5491"/>
<dbReference type="HOGENOM" id="CLU_020639_0_0_6"/>
<dbReference type="Proteomes" id="UP000001582">
    <property type="component" value="Chromosome"/>
</dbReference>
<dbReference type="GO" id="GO:0005886">
    <property type="term" value="C:plasma membrane"/>
    <property type="evidence" value="ECO:0007669"/>
    <property type="project" value="UniProtKB-SubCell"/>
</dbReference>
<dbReference type="GO" id="GO:0010181">
    <property type="term" value="F:FMN binding"/>
    <property type="evidence" value="ECO:0007669"/>
    <property type="project" value="InterPro"/>
</dbReference>
<dbReference type="GO" id="GO:0004459">
    <property type="term" value="F:L-lactate dehydrogenase activity"/>
    <property type="evidence" value="ECO:0007669"/>
    <property type="project" value="UniProtKB-UniRule"/>
</dbReference>
<dbReference type="GO" id="GO:0009060">
    <property type="term" value="P:aerobic respiration"/>
    <property type="evidence" value="ECO:0007669"/>
    <property type="project" value="TreeGrafter"/>
</dbReference>
<dbReference type="GO" id="GO:0006089">
    <property type="term" value="P:lactate metabolic process"/>
    <property type="evidence" value="ECO:0007669"/>
    <property type="project" value="UniProtKB-UniRule"/>
</dbReference>
<dbReference type="CDD" id="cd02809">
    <property type="entry name" value="alpha_hydroxyacid_oxid_FMN"/>
    <property type="match status" value="1"/>
</dbReference>
<dbReference type="FunFam" id="3.20.20.70:FF:000029">
    <property type="entry name" value="L-lactate dehydrogenase"/>
    <property type="match status" value="1"/>
</dbReference>
<dbReference type="Gene3D" id="3.20.20.70">
    <property type="entry name" value="Aldolase class I"/>
    <property type="match status" value="1"/>
</dbReference>
<dbReference type="HAMAP" id="MF_01559">
    <property type="entry name" value="L_lact_dehydr"/>
    <property type="match status" value="1"/>
</dbReference>
<dbReference type="InterPro" id="IPR013785">
    <property type="entry name" value="Aldolase_TIM"/>
</dbReference>
<dbReference type="InterPro" id="IPR012133">
    <property type="entry name" value="Alpha-hydoxy_acid_DH_FMN"/>
</dbReference>
<dbReference type="InterPro" id="IPR000262">
    <property type="entry name" value="FMN-dep_DH"/>
</dbReference>
<dbReference type="InterPro" id="IPR037396">
    <property type="entry name" value="FMN_HAD"/>
</dbReference>
<dbReference type="InterPro" id="IPR008259">
    <property type="entry name" value="FMN_hydac_DH_AS"/>
</dbReference>
<dbReference type="InterPro" id="IPR020920">
    <property type="entry name" value="LldD"/>
</dbReference>
<dbReference type="NCBIfam" id="NF033901">
    <property type="entry name" value="L_lactate_LldD"/>
    <property type="match status" value="1"/>
</dbReference>
<dbReference type="NCBIfam" id="NF008398">
    <property type="entry name" value="PRK11197.1"/>
    <property type="match status" value="1"/>
</dbReference>
<dbReference type="PANTHER" id="PTHR10578:SF85">
    <property type="entry name" value="L-LACTATE DEHYDROGENASE"/>
    <property type="match status" value="1"/>
</dbReference>
<dbReference type="PANTHER" id="PTHR10578">
    <property type="entry name" value="S -2-HYDROXY-ACID OXIDASE-RELATED"/>
    <property type="match status" value="1"/>
</dbReference>
<dbReference type="Pfam" id="PF01070">
    <property type="entry name" value="FMN_dh"/>
    <property type="match status" value="1"/>
</dbReference>
<dbReference type="PIRSF" id="PIRSF000138">
    <property type="entry name" value="Al-hdrx_acd_dh"/>
    <property type="match status" value="1"/>
</dbReference>
<dbReference type="SUPFAM" id="SSF51395">
    <property type="entry name" value="FMN-linked oxidoreductases"/>
    <property type="match status" value="1"/>
</dbReference>
<dbReference type="PROSITE" id="PS00557">
    <property type="entry name" value="FMN_HYDROXY_ACID_DH_1"/>
    <property type="match status" value="1"/>
</dbReference>
<dbReference type="PROSITE" id="PS51349">
    <property type="entry name" value="FMN_HYDROXY_ACID_DH_2"/>
    <property type="match status" value="1"/>
</dbReference>
<protein>
    <recommendedName>
        <fullName evidence="1">L-lactate dehydrogenase</fullName>
        <ecNumber evidence="1">1.1.-.-</ecNumber>
    </recommendedName>
</protein>
<name>LLDD_PSEP7</name>